<accession>Q0RM12</accession>
<reference key="1">
    <citation type="journal article" date="2007" name="Genome Res.">
        <title>Genome characteristics of facultatively symbiotic Frankia sp. strains reflect host range and host plant biogeography.</title>
        <authorList>
            <person name="Normand P."/>
            <person name="Lapierre P."/>
            <person name="Tisa L.S."/>
            <person name="Gogarten J.P."/>
            <person name="Alloisio N."/>
            <person name="Bagnarol E."/>
            <person name="Bassi C.A."/>
            <person name="Berry A.M."/>
            <person name="Bickhart D.M."/>
            <person name="Choisne N."/>
            <person name="Couloux A."/>
            <person name="Cournoyer B."/>
            <person name="Cruveiller S."/>
            <person name="Daubin V."/>
            <person name="Demange N."/>
            <person name="Francino M.P."/>
            <person name="Goltsman E."/>
            <person name="Huang Y."/>
            <person name="Kopp O.R."/>
            <person name="Labarre L."/>
            <person name="Lapidus A."/>
            <person name="Lavire C."/>
            <person name="Marechal J."/>
            <person name="Martinez M."/>
            <person name="Mastronunzio J.E."/>
            <person name="Mullin B.C."/>
            <person name="Niemann J."/>
            <person name="Pujic P."/>
            <person name="Rawnsley T."/>
            <person name="Rouy Z."/>
            <person name="Schenowitz C."/>
            <person name="Sellstedt A."/>
            <person name="Tavares F."/>
            <person name="Tomkins J.P."/>
            <person name="Vallenet D."/>
            <person name="Valverde C."/>
            <person name="Wall L.G."/>
            <person name="Wang Y."/>
            <person name="Medigue C."/>
            <person name="Benson D.R."/>
        </authorList>
    </citation>
    <scope>NUCLEOTIDE SEQUENCE [LARGE SCALE GENOMIC DNA]</scope>
    <source>
        <strain>DSM 45986 / CECT 9034 / ACN14a</strain>
    </source>
</reference>
<proteinExistence type="inferred from homology"/>
<gene>
    <name evidence="1" type="primary">ureG</name>
    <name type="ordered locus">FRAAL2796</name>
</gene>
<organism>
    <name type="scientific">Frankia alni (strain DSM 45986 / CECT 9034 / ACN14a)</name>
    <dbReference type="NCBI Taxonomy" id="326424"/>
    <lineage>
        <taxon>Bacteria</taxon>
        <taxon>Bacillati</taxon>
        <taxon>Actinomycetota</taxon>
        <taxon>Actinomycetes</taxon>
        <taxon>Frankiales</taxon>
        <taxon>Frankiaceae</taxon>
        <taxon>Frankia</taxon>
    </lineage>
</organism>
<feature type="chain" id="PRO_0000347391" description="Urease accessory protein UreG">
    <location>
        <begin position="1"/>
        <end position="217"/>
    </location>
</feature>
<feature type="binding site" evidence="1">
    <location>
        <begin position="13"/>
        <end position="20"/>
    </location>
    <ligand>
        <name>GTP</name>
        <dbReference type="ChEBI" id="CHEBI:37565"/>
    </ligand>
</feature>
<dbReference type="EMBL" id="CT573213">
    <property type="protein sequence ID" value="CAJ61440.1"/>
    <property type="molecule type" value="Genomic_DNA"/>
</dbReference>
<dbReference type="SMR" id="Q0RM12"/>
<dbReference type="STRING" id="326424.FRAAL2796"/>
<dbReference type="KEGG" id="fal:FRAAL2796"/>
<dbReference type="eggNOG" id="COG0378">
    <property type="taxonomic scope" value="Bacteria"/>
</dbReference>
<dbReference type="HOGENOM" id="CLU_072144_1_0_11"/>
<dbReference type="OrthoDB" id="9802035at2"/>
<dbReference type="Proteomes" id="UP000000657">
    <property type="component" value="Chromosome"/>
</dbReference>
<dbReference type="GO" id="GO:0005737">
    <property type="term" value="C:cytoplasm"/>
    <property type="evidence" value="ECO:0007669"/>
    <property type="project" value="UniProtKB-SubCell"/>
</dbReference>
<dbReference type="GO" id="GO:0005525">
    <property type="term" value="F:GTP binding"/>
    <property type="evidence" value="ECO:0007669"/>
    <property type="project" value="UniProtKB-KW"/>
</dbReference>
<dbReference type="GO" id="GO:0003924">
    <property type="term" value="F:GTPase activity"/>
    <property type="evidence" value="ECO:0007669"/>
    <property type="project" value="InterPro"/>
</dbReference>
<dbReference type="GO" id="GO:0016151">
    <property type="term" value="F:nickel cation binding"/>
    <property type="evidence" value="ECO:0007669"/>
    <property type="project" value="UniProtKB-UniRule"/>
</dbReference>
<dbReference type="GO" id="GO:0043419">
    <property type="term" value="P:urea catabolic process"/>
    <property type="evidence" value="ECO:0007669"/>
    <property type="project" value="InterPro"/>
</dbReference>
<dbReference type="Gene3D" id="3.40.50.300">
    <property type="entry name" value="P-loop containing nucleotide triphosphate hydrolases"/>
    <property type="match status" value="1"/>
</dbReference>
<dbReference type="HAMAP" id="MF_01389">
    <property type="entry name" value="UreG"/>
    <property type="match status" value="1"/>
</dbReference>
<dbReference type="InterPro" id="IPR003495">
    <property type="entry name" value="CobW/HypB/UreG_nucleotide-bd"/>
</dbReference>
<dbReference type="InterPro" id="IPR027417">
    <property type="entry name" value="P-loop_NTPase"/>
</dbReference>
<dbReference type="InterPro" id="IPR004400">
    <property type="entry name" value="UreG"/>
</dbReference>
<dbReference type="NCBIfam" id="TIGR00101">
    <property type="entry name" value="ureG"/>
    <property type="match status" value="1"/>
</dbReference>
<dbReference type="PANTHER" id="PTHR31715">
    <property type="entry name" value="UREASE ACCESSORY PROTEIN G"/>
    <property type="match status" value="1"/>
</dbReference>
<dbReference type="PANTHER" id="PTHR31715:SF0">
    <property type="entry name" value="UREASE ACCESSORY PROTEIN G"/>
    <property type="match status" value="1"/>
</dbReference>
<dbReference type="Pfam" id="PF02492">
    <property type="entry name" value="cobW"/>
    <property type="match status" value="1"/>
</dbReference>
<dbReference type="PIRSF" id="PIRSF005624">
    <property type="entry name" value="Ni-bind_GTPase"/>
    <property type="match status" value="1"/>
</dbReference>
<dbReference type="SUPFAM" id="SSF52540">
    <property type="entry name" value="P-loop containing nucleoside triphosphate hydrolases"/>
    <property type="match status" value="1"/>
</dbReference>
<evidence type="ECO:0000255" key="1">
    <source>
        <dbReference type="HAMAP-Rule" id="MF_01389"/>
    </source>
</evidence>
<comment type="function">
    <text evidence="1">Facilitates the functional incorporation of the urease nickel metallocenter. This process requires GTP hydrolysis, probably effectuated by UreG.</text>
</comment>
<comment type="subunit">
    <text evidence="1">Homodimer. UreD, UreF and UreG form a complex that acts as a GTP-hydrolysis-dependent molecular chaperone, activating the urease apoprotein by helping to assemble the nickel containing metallocenter of UreC. The UreE protein probably delivers the nickel.</text>
</comment>
<comment type="subcellular location">
    <subcellularLocation>
        <location evidence="1">Cytoplasm</location>
    </subcellularLocation>
</comment>
<comment type="similarity">
    <text evidence="1">Belongs to the SIMIBI class G3E GTPase family. UreG subfamily.</text>
</comment>
<protein>
    <recommendedName>
        <fullName evidence="1">Urease accessory protein UreG</fullName>
    </recommendedName>
</protein>
<sequence length="217" mass="22254">MPLGRAPRIGVGGPVGSGKTALVAALCRSLAPSLRLGVVTNDIYTTEDADFLRRAGVLDPQRIRAVETGCCPHTAIRDDITANLDTVEDLEADTGPLDLVLVESGGDNLTATFSYGLIDRQIFVVDVAGGDKVPRKGGPGVTLSDLLVINKTDLAPLVGADLGVMARDAAAARGPRPVLFTSLTADPTAGDVTAWVRAQLADLSPHGPRGATPAAAG</sequence>
<name>UREG_FRAAA</name>
<keyword id="KW-0143">Chaperone</keyword>
<keyword id="KW-0963">Cytoplasm</keyword>
<keyword id="KW-0342">GTP-binding</keyword>
<keyword id="KW-0996">Nickel insertion</keyword>
<keyword id="KW-0547">Nucleotide-binding</keyword>
<keyword id="KW-1185">Reference proteome</keyword>